<comment type="function">
    <text evidence="1">Plays an essential role for the activation and immortalization of human B-cells. Represses transcription of viral promoters TP1 and Cp through interaction with host RBPJ, and inhibits EBNA2-mediated activation of these promoters. Targets host chromatin through interactions with host transcription factors, especially RBPJ and IRF4. Alternatively, EBNA6 also regulates the transcription of the EBV oncogene LMP1 in a cell cycle-dependent manner. Modulates the activity of several host proteins involved in cell cycle regulation including host cyclin A, MYC, RB, p21 and p27 mainly through binding to the host SCF(SKP2) complex. Inhibits the promoter of host H2AX and targets H2AX to proteasomal degradation in order to promote latency and cell proliferation. Upregulates host PIM1 expression and stabilization. Potentiates PIM1 to promote cell proliferation by inhibiting the growth suppressive properties of p21.</text>
</comment>
<comment type="subunit">
    <text evidence="1">Interacts with host CTPB1; this interaction leads to gene repression, but also seems to interfere with the repressive function of CtBP pre-bound to DNA, leading to EBNA6 mediated up-regulation of many host genes. Interacts with host MYC; this interaction enhances MYC stability. Interacts (via N-terminus) with host RBPJ. Interacts (via N-terminus) with host histone H2AX; this interaction facilitates H2AX proteasomal degradation. Interacts with host TP73; this interaction inhibits TP73-mediated apoptotic pathway. Interacts (via N-terminus) with host PIM1; this interaction upregulates and stabilizes PIM1 and induces cell proliferation by inhibiting the growth suppressive properties of p21.</text>
</comment>
<comment type="subcellular location">
    <subcellularLocation>
        <location evidence="1">Host nucleus</location>
    </subcellularLocation>
    <subcellularLocation>
        <location evidence="1">Host nucleus matrix</location>
    </subcellularLocation>
    <text evidence="1">Associated with the nuclear matrix.</text>
</comment>
<comment type="similarity">
    <text evidence="3">Belongs to the herpesviridae EBNA-6 family.</text>
</comment>
<protein>
    <recommendedName>
        <fullName>Epstein-Barr nuclear antigen 6</fullName>
        <shortName>EBNA-6</shortName>
        <shortName>EBV nuclear antigen 6</shortName>
    </recommendedName>
    <alternativeName>
        <fullName>Epstein-Barr nuclear antigen 3C</fullName>
        <shortName>EBNA-3C</shortName>
        <shortName>EBV nuclear antigen 3C</shortName>
    </alternativeName>
    <alternativeName>
        <fullName>Epstein-Barr nuclear antigen 4B</fullName>
        <shortName>EBNA-4B</shortName>
        <shortName>EBV nuclear antigen 4B</shortName>
    </alternativeName>
</protein>
<organism>
    <name type="scientific">Epstein-Barr virus (strain AG876)</name>
    <name type="common">HHV-4</name>
    <name type="synonym">Human herpesvirus 4</name>
    <dbReference type="NCBI Taxonomy" id="82830"/>
    <lineage>
        <taxon>Viruses</taxon>
        <taxon>Duplodnaviria</taxon>
        <taxon>Heunggongvirae</taxon>
        <taxon>Peploviricota</taxon>
        <taxon>Herviviricetes</taxon>
        <taxon>Herpesvirales</taxon>
        <taxon>Orthoherpesviridae</taxon>
        <taxon>Gammaherpesvirinae</taxon>
        <taxon>Lymphocryptovirus</taxon>
        <taxon>Lymphocryptovirus humangamma4</taxon>
        <taxon>Epstein-Barr virus (strain GD1)</taxon>
    </lineage>
</organism>
<evidence type="ECO:0000250" key="1">
    <source>
        <dbReference type="UniProtKB" id="P03204"/>
    </source>
</evidence>
<evidence type="ECO:0000256" key="2">
    <source>
        <dbReference type="SAM" id="MobiDB-lite"/>
    </source>
</evidence>
<evidence type="ECO:0000305" key="3"/>
<feature type="chain" id="PRO_0000375940" description="Epstein-Barr nuclear antigen 6">
    <location>
        <begin position="1"/>
        <end position="1069"/>
    </location>
</feature>
<feature type="region of interest" description="Disordered" evidence="2">
    <location>
        <begin position="1"/>
        <end position="75"/>
    </location>
</feature>
<feature type="region of interest" description="Disordered" evidence="2">
    <location>
        <begin position="353"/>
        <end position="708"/>
    </location>
</feature>
<feature type="region of interest" description="Disordered" evidence="2">
    <location>
        <begin position="733"/>
        <end position="776"/>
    </location>
</feature>
<feature type="region of interest" description="Disordered" evidence="2">
    <location>
        <begin position="884"/>
        <end position="932"/>
    </location>
</feature>
<feature type="region of interest" description="Disordered" evidence="2">
    <location>
        <begin position="1008"/>
        <end position="1069"/>
    </location>
</feature>
<feature type="compositionally biased region" description="Basic and acidic residues" evidence="2">
    <location>
        <begin position="50"/>
        <end position="67"/>
    </location>
</feature>
<feature type="compositionally biased region" description="Acidic residues" evidence="2">
    <location>
        <begin position="381"/>
        <end position="391"/>
    </location>
</feature>
<feature type="compositionally biased region" description="Acidic residues" evidence="2">
    <location>
        <begin position="507"/>
        <end position="524"/>
    </location>
</feature>
<feature type="compositionally biased region" description="Polar residues" evidence="2">
    <location>
        <begin position="543"/>
        <end position="561"/>
    </location>
</feature>
<feature type="compositionally biased region" description="Low complexity" evidence="2">
    <location>
        <begin position="689"/>
        <end position="708"/>
    </location>
</feature>
<feature type="compositionally biased region" description="Basic and acidic residues" evidence="2">
    <location>
        <begin position="742"/>
        <end position="751"/>
    </location>
</feature>
<feature type="compositionally biased region" description="Polar residues" evidence="2">
    <location>
        <begin position="1032"/>
        <end position="1048"/>
    </location>
</feature>
<organismHost>
    <name type="scientific">Homo sapiens</name>
    <name type="common">Human</name>
    <dbReference type="NCBI Taxonomy" id="9606"/>
</organismHost>
<name>EBNA6_EBVA8</name>
<proteinExistence type="inferred from homology"/>
<accession>Q69140</accession>
<reference key="1">
    <citation type="journal article" date="1990" name="J. Virol.">
        <title>Epstein-Barr virus types 1 and 2 differ in their EBNA-3A, EBNA-3B, and EBNA-3C genes.</title>
        <authorList>
            <person name="Sample J."/>
            <person name="Young L."/>
            <person name="Martin B."/>
            <person name="Chatman T."/>
            <person name="Kieff E.D."/>
            <person name="Rickinson A."/>
        </authorList>
    </citation>
    <scope>NUCLEOTIDE SEQUENCE [GENOMIC DNA]</scope>
</reference>
<reference key="2">
    <citation type="journal article" date="2006" name="Virology">
        <title>The genome of Epstein-Barr virus type 2 strain AG876.</title>
        <authorList>
            <person name="Dolan A."/>
            <person name="Addison C."/>
            <person name="Gatherer D."/>
            <person name="Davison A.J."/>
            <person name="McGeoch D.J."/>
        </authorList>
    </citation>
    <scope>NUCLEOTIDE SEQUENCE [LARGE SCALE GENOMIC DNA]</scope>
</reference>
<gene>
    <name type="primary">EBNA6</name>
    <name type="ORF">BERF3-BERF4</name>
</gene>
<dbReference type="EMBL" id="M34440">
    <property type="protein sequence ID" value="AAA45895.1"/>
    <property type="molecule type" value="Genomic_DNA"/>
</dbReference>
<dbReference type="EMBL" id="DQ279927">
    <property type="protein sequence ID" value="ABB89245.1"/>
    <property type="molecule type" value="Genomic_DNA"/>
</dbReference>
<dbReference type="PIR" id="S27922">
    <property type="entry name" value="S27922"/>
</dbReference>
<dbReference type="RefSeq" id="YP_001129465.1">
    <property type="nucleotide sequence ID" value="NC_009334.1"/>
</dbReference>
<dbReference type="MINT" id="Q69140"/>
<dbReference type="KEGG" id="vg:5176150"/>
<dbReference type="Proteomes" id="UP000007639">
    <property type="component" value="Genome"/>
</dbReference>
<dbReference type="GO" id="GO:0044204">
    <property type="term" value="C:host cell nuclear matrix"/>
    <property type="evidence" value="ECO:0007669"/>
    <property type="project" value="UniProtKB-SubCell"/>
</dbReference>
<dbReference type="GO" id="GO:0052150">
    <property type="term" value="P:symbiont-mediated perturbation of host apoptosis"/>
    <property type="evidence" value="ECO:0007669"/>
    <property type="project" value="UniProtKB-KW"/>
</dbReference>
<dbReference type="GO" id="GO:0039645">
    <property type="term" value="P:symbiont-mediated perturbation of host cell cycle G1/S transition checkpoint"/>
    <property type="evidence" value="ECO:0007669"/>
    <property type="project" value="UniProtKB-KW"/>
</dbReference>
<dbReference type="GO" id="GO:0019042">
    <property type="term" value="P:viral latency"/>
    <property type="evidence" value="ECO:0007669"/>
    <property type="project" value="UniProtKB-KW"/>
</dbReference>
<dbReference type="InterPro" id="IPR007706">
    <property type="entry name" value="EBNA-3/4/6"/>
</dbReference>
<dbReference type="Pfam" id="PF05009">
    <property type="entry name" value="EBV-NA3"/>
    <property type="match status" value="1"/>
</dbReference>
<sequence length="1069" mass="118146">MESFEGEGDSIQSPDNARGDDVQNTGEHIQDPGPGPSTGGASEGLVQNEPDSRDQQSRGQRRGDENRGWMQRIRRRRRRRAALSGHLLDMEDNVPPWFPPHDITPYVARNIRDAACQAVKHSHLQALSNLILDSGLDTQHLLCFVMAARQRLQDIRRGPLVVEGGVGWRHWLLTSPSRSWSMGYRTATLRTLTPVPNRVGADSIMLTATFGCQNGALAINTFSATVWIPPPAGPREQERYAREAEVRFLRGKWQRRFRRIFDLIELCGSLHHVWQNMLQTEENLLDFVRFMGVMSSCNSSSVNYWFHKTIGNFKPYYPWNAPPNENPYHARRGIKEQVIQKAFLKAQRQGLSMLATGGGPRGDATSETSSDEDTGRQGSDVELESSDDELPYIDPNMEPVQQRPVMFVSRVPVRKPRTLPWPTPKTHPVKRTIVKTSYRSDEAEEAQSTPERPGPSKQPSEPVEPAHTTPAGRSTVILHEPPREPEAVSFKPPPPPSRRRRGACVVYDDDIIEVIDVETTEEETTSMQRQPPLGQQPPPPVISTGSAMSSSHTDPSVTQPSKPHRKPQDGFQRSGRRQKRAMPPPVSPSDAGPPSTRPRVMAPPSTGPRVMATPSTGPRDMAPPSTGPRDMAPPSTGPRDMAPPSTGPRDMAPTVVHMFTRERLLTQSTGPAPRSFWEMRAGRDAPKIQQEPSSQQQPATQSTPPCQSWVPSVYVLPAVDAGNAQPLQISHLSSMSPTQPISHEEQPRYEDPDTPLDLSLHPDTATLPPTQDLYPGREDLQATQAPYPGYEEPRPPQAPFVGDYGFVQIPSAQWEPHPSQGTYQGHIDPQLPAALDLGPEQPRFPQDPYVYSGGQLSSCPGYAGPWPSRPQHPRYRHTLALWPREPRHGHSQGPWKPWSAHLPPQWDGSAGHGQDQVSQFPHLHSETGPPRLQLSSVPQVLYPQPLVSSSAPSWSSPQPRAPIRPIPTRFPPPPMPLQDSMAVGCDSSGTACPSMPFASDYSQGAFTPLDINAPTPKSPRVEESSHGPARCSQATSEAQEILSDNSEISVFPKDAKQTDYDASTESELD</sequence>
<keyword id="KW-1078">G1/S host cell cycle checkpoint dysregulation by virus</keyword>
<keyword id="KW-1048">Host nucleus</keyword>
<keyword id="KW-0945">Host-virus interaction</keyword>
<keyword id="KW-1119">Modulation of host cell apoptosis by virus</keyword>
<keyword id="KW-1121">Modulation of host cell cycle by virus</keyword>
<keyword id="KW-1185">Reference proteome</keyword>
<keyword id="KW-0677">Repeat</keyword>
<keyword id="KW-0804">Transcription</keyword>
<keyword id="KW-0805">Transcription regulation</keyword>
<keyword id="KW-1251">Viral latency</keyword>
<keyword id="KW-1276">Viral latency initiation and maintenance</keyword>